<organism>
    <name type="scientific">Schizosaccharomyces pombe (strain 972 / ATCC 24843)</name>
    <name type="common">Fission yeast</name>
    <dbReference type="NCBI Taxonomy" id="284812"/>
    <lineage>
        <taxon>Eukaryota</taxon>
        <taxon>Fungi</taxon>
        <taxon>Dikarya</taxon>
        <taxon>Ascomycota</taxon>
        <taxon>Taphrinomycotina</taxon>
        <taxon>Schizosaccharomycetes</taxon>
        <taxon>Schizosaccharomycetales</taxon>
        <taxon>Schizosaccharomycetaceae</taxon>
        <taxon>Schizosaccharomyces</taxon>
    </lineage>
</organism>
<dbReference type="EMBL" id="CU329672">
    <property type="protein sequence ID" value="CAA19262.1"/>
    <property type="molecule type" value="Genomic_DNA"/>
</dbReference>
<dbReference type="PIR" id="T41394">
    <property type="entry name" value="T41394"/>
</dbReference>
<dbReference type="STRING" id="284812.O74947"/>
<dbReference type="iPTMnet" id="O74947"/>
<dbReference type="PaxDb" id="4896-SPCC553.10.1"/>
<dbReference type="EnsemblFungi" id="SPCC553.10.1">
    <property type="protein sequence ID" value="SPCC553.10.1:pep"/>
    <property type="gene ID" value="SPCC553.10"/>
</dbReference>
<dbReference type="KEGG" id="spo:2539384"/>
<dbReference type="PomBase" id="SPCC553.10"/>
<dbReference type="VEuPathDB" id="FungiDB:SPCC553.10"/>
<dbReference type="eggNOG" id="ENOG502S7YR">
    <property type="taxonomic scope" value="Eukaryota"/>
</dbReference>
<dbReference type="HOGENOM" id="CLU_794915_0_0_1"/>
<dbReference type="InParanoid" id="O74947"/>
<dbReference type="PRO" id="PR:O74947"/>
<dbReference type="Proteomes" id="UP000002485">
    <property type="component" value="Chromosome III"/>
</dbReference>
<dbReference type="GO" id="GO:0005789">
    <property type="term" value="C:endoplasmic reticulum membrane"/>
    <property type="evidence" value="ECO:0007669"/>
    <property type="project" value="UniProtKB-SubCell"/>
</dbReference>
<dbReference type="GO" id="GO:0009897">
    <property type="term" value="C:external side of plasma membrane"/>
    <property type="evidence" value="ECO:0000304"/>
    <property type="project" value="PomBase"/>
</dbReference>
<dbReference type="InterPro" id="IPR052479">
    <property type="entry name" value="GPI-anchor_Adhesion_Reg"/>
</dbReference>
<dbReference type="InterPro" id="IPR018466">
    <property type="entry name" value="Kre9/Knh1-like_N"/>
</dbReference>
<dbReference type="PANTHER" id="PTHR35185">
    <property type="entry name" value="SERINE/THREONINE-RICH PROTEIN ADG2-RELATED"/>
    <property type="match status" value="1"/>
</dbReference>
<dbReference type="PANTHER" id="PTHR35185:SF1">
    <property type="entry name" value="UPF0619 GPI-ANCHORED MEMBRANE PROTEIN C1322.10"/>
    <property type="match status" value="1"/>
</dbReference>
<dbReference type="Pfam" id="PF10342">
    <property type="entry name" value="Kre9_KNH"/>
    <property type="match status" value="1"/>
</dbReference>
<gene>
    <name type="ORF">SPCC553.10</name>
</gene>
<name>YJBA_SCHPO</name>
<proteinExistence type="inferred from homology"/>
<protein>
    <recommendedName>
        <fullName>Uncharacterized protein C553.10</fullName>
    </recommendedName>
</protein>
<comment type="subcellular location">
    <subcellularLocation>
        <location evidence="3">Endoplasmic reticulum membrane</location>
        <topology evidence="3">Single-pass membrane protein</topology>
    </subcellularLocation>
    <text>Localizes at the cell surface.</text>
</comment>
<sequence>MLFKISFLALIASALAMSINSPTNGDTWQTNGEEQITWNVVSTDEPSAALYLTNFAVYPTVTQYLDTVDTSTGSYTTNTTNWPTGQGFQINMAYPGRPEQIYAQSQQFNIVEGAASSSSSSSSSSSSLVSSTTSSSSSATPSTTSSSSSSSSSSSSSSSKSSSSSSKSSSRSSSRTTSHRTTSHKSSSYRPTVFPYTTISHYNITNATNGTYCNGTNGTNFTCIVNASNATNSTFWLNGTNSTNGTNSTNSTSTTSHSLTKLPTSSKSLTTSKTTASGHITKGVMEALSTNDTTNTTDDATNTTSDSSSSSSASASSSSSSSSAASLVSQPVGISAVIAFFAVALSLTL</sequence>
<feature type="signal peptide" evidence="1">
    <location>
        <begin position="1"/>
        <end position="16"/>
    </location>
</feature>
<feature type="chain" id="PRO_0000372343" description="Uncharacterized protein C553.10">
    <location>
        <begin position="17"/>
        <end position="349"/>
    </location>
</feature>
<feature type="topological domain" description="Lumenal" evidence="1">
    <location>
        <begin position="17"/>
        <end position="326"/>
    </location>
</feature>
<feature type="transmembrane region" description="Helical" evidence="1">
    <location>
        <begin position="327"/>
        <end position="347"/>
    </location>
</feature>
<feature type="topological domain" description="Cytoplasmic" evidence="1">
    <location>
        <begin position="348"/>
        <end position="349"/>
    </location>
</feature>
<feature type="region of interest" description="Disordered" evidence="2">
    <location>
        <begin position="115"/>
        <end position="190"/>
    </location>
</feature>
<feature type="region of interest" description="Disordered" evidence="2">
    <location>
        <begin position="243"/>
        <end position="322"/>
    </location>
</feature>
<feature type="compositionally biased region" description="Low complexity" evidence="2">
    <location>
        <begin position="116"/>
        <end position="176"/>
    </location>
</feature>
<feature type="compositionally biased region" description="Low complexity" evidence="2">
    <location>
        <begin position="243"/>
        <end position="278"/>
    </location>
</feature>
<feature type="compositionally biased region" description="Low complexity" evidence="2">
    <location>
        <begin position="289"/>
        <end position="322"/>
    </location>
</feature>
<reference key="1">
    <citation type="journal article" date="2002" name="Nature">
        <title>The genome sequence of Schizosaccharomyces pombe.</title>
        <authorList>
            <person name="Wood V."/>
            <person name="Gwilliam R."/>
            <person name="Rajandream M.A."/>
            <person name="Lyne M.H."/>
            <person name="Lyne R."/>
            <person name="Stewart A."/>
            <person name="Sgouros J.G."/>
            <person name="Peat N."/>
            <person name="Hayles J."/>
            <person name="Baker S.G."/>
            <person name="Basham D."/>
            <person name="Bowman S."/>
            <person name="Brooks K."/>
            <person name="Brown D."/>
            <person name="Brown S."/>
            <person name="Chillingworth T."/>
            <person name="Churcher C.M."/>
            <person name="Collins M."/>
            <person name="Connor R."/>
            <person name="Cronin A."/>
            <person name="Davis P."/>
            <person name="Feltwell T."/>
            <person name="Fraser A."/>
            <person name="Gentles S."/>
            <person name="Goble A."/>
            <person name="Hamlin N."/>
            <person name="Harris D.E."/>
            <person name="Hidalgo J."/>
            <person name="Hodgson G."/>
            <person name="Holroyd S."/>
            <person name="Hornsby T."/>
            <person name="Howarth S."/>
            <person name="Huckle E.J."/>
            <person name="Hunt S."/>
            <person name="Jagels K."/>
            <person name="James K.D."/>
            <person name="Jones L."/>
            <person name="Jones M."/>
            <person name="Leather S."/>
            <person name="McDonald S."/>
            <person name="McLean J."/>
            <person name="Mooney P."/>
            <person name="Moule S."/>
            <person name="Mungall K.L."/>
            <person name="Murphy L.D."/>
            <person name="Niblett D."/>
            <person name="Odell C."/>
            <person name="Oliver K."/>
            <person name="O'Neil S."/>
            <person name="Pearson D."/>
            <person name="Quail M.A."/>
            <person name="Rabbinowitsch E."/>
            <person name="Rutherford K.M."/>
            <person name="Rutter S."/>
            <person name="Saunders D."/>
            <person name="Seeger K."/>
            <person name="Sharp S."/>
            <person name="Skelton J."/>
            <person name="Simmonds M.N."/>
            <person name="Squares R."/>
            <person name="Squares S."/>
            <person name="Stevens K."/>
            <person name="Taylor K."/>
            <person name="Taylor R.G."/>
            <person name="Tivey A."/>
            <person name="Walsh S.V."/>
            <person name="Warren T."/>
            <person name="Whitehead S."/>
            <person name="Woodward J.R."/>
            <person name="Volckaert G."/>
            <person name="Aert R."/>
            <person name="Robben J."/>
            <person name="Grymonprez B."/>
            <person name="Weltjens I."/>
            <person name="Vanstreels E."/>
            <person name="Rieger M."/>
            <person name="Schaefer M."/>
            <person name="Mueller-Auer S."/>
            <person name="Gabel C."/>
            <person name="Fuchs M."/>
            <person name="Duesterhoeft A."/>
            <person name="Fritzc C."/>
            <person name="Holzer E."/>
            <person name="Moestl D."/>
            <person name="Hilbert H."/>
            <person name="Borzym K."/>
            <person name="Langer I."/>
            <person name="Beck A."/>
            <person name="Lehrach H."/>
            <person name="Reinhardt R."/>
            <person name="Pohl T.M."/>
            <person name="Eger P."/>
            <person name="Zimmermann W."/>
            <person name="Wedler H."/>
            <person name="Wambutt R."/>
            <person name="Purnelle B."/>
            <person name="Goffeau A."/>
            <person name="Cadieu E."/>
            <person name="Dreano S."/>
            <person name="Gloux S."/>
            <person name="Lelaure V."/>
            <person name="Mottier S."/>
            <person name="Galibert F."/>
            <person name="Aves S.J."/>
            <person name="Xiang Z."/>
            <person name="Hunt C."/>
            <person name="Moore K."/>
            <person name="Hurst S.M."/>
            <person name="Lucas M."/>
            <person name="Rochet M."/>
            <person name="Gaillardin C."/>
            <person name="Tallada V.A."/>
            <person name="Garzon A."/>
            <person name="Thode G."/>
            <person name="Daga R.R."/>
            <person name="Cruzado L."/>
            <person name="Jimenez J."/>
            <person name="Sanchez M."/>
            <person name="del Rey F."/>
            <person name="Benito J."/>
            <person name="Dominguez A."/>
            <person name="Revuelta J.L."/>
            <person name="Moreno S."/>
            <person name="Armstrong J."/>
            <person name="Forsburg S.L."/>
            <person name="Cerutti L."/>
            <person name="Lowe T."/>
            <person name="McCombie W.R."/>
            <person name="Paulsen I."/>
            <person name="Potashkin J."/>
            <person name="Shpakovski G.V."/>
            <person name="Ussery D."/>
            <person name="Barrell B.G."/>
            <person name="Nurse P."/>
        </authorList>
    </citation>
    <scope>NUCLEOTIDE SEQUENCE [LARGE SCALE GENOMIC DNA]</scope>
    <source>
        <strain>972 / ATCC 24843</strain>
    </source>
</reference>
<reference key="2">
    <citation type="journal article" date="2006" name="Nat. Biotechnol.">
        <title>ORFeome cloning and global analysis of protein localization in the fission yeast Schizosaccharomyces pombe.</title>
        <authorList>
            <person name="Matsuyama A."/>
            <person name="Arai R."/>
            <person name="Yashiroda Y."/>
            <person name="Shirai A."/>
            <person name="Kamata A."/>
            <person name="Sekido S."/>
            <person name="Kobayashi Y."/>
            <person name="Hashimoto A."/>
            <person name="Hamamoto M."/>
            <person name="Hiraoka Y."/>
            <person name="Horinouchi S."/>
            <person name="Yoshida M."/>
        </authorList>
    </citation>
    <scope>SUBCELLULAR LOCATION [LARGE SCALE ANALYSIS]</scope>
</reference>
<accession>O74947</accession>
<evidence type="ECO:0000255" key="1"/>
<evidence type="ECO:0000256" key="2">
    <source>
        <dbReference type="SAM" id="MobiDB-lite"/>
    </source>
</evidence>
<evidence type="ECO:0000269" key="3">
    <source>
    </source>
</evidence>
<keyword id="KW-0256">Endoplasmic reticulum</keyword>
<keyword id="KW-0472">Membrane</keyword>
<keyword id="KW-1185">Reference proteome</keyword>
<keyword id="KW-0732">Signal</keyword>
<keyword id="KW-0812">Transmembrane</keyword>
<keyword id="KW-1133">Transmembrane helix</keyword>